<feature type="chain" id="PRO_0000461394" description="L-ornithine N(5)-monooxygenase SIDA">
    <location>
        <begin position="1"/>
        <end position="536"/>
    </location>
</feature>
<feature type="region of interest" description="Disordered" evidence="3">
    <location>
        <begin position="1"/>
        <end position="25"/>
    </location>
</feature>
<feature type="binding site" evidence="1">
    <location>
        <begin position="115"/>
        <end position="123"/>
    </location>
    <ligand>
        <name>FAD</name>
        <dbReference type="ChEBI" id="CHEBI:57692"/>
    </ligand>
</feature>
<feature type="binding site" evidence="1">
    <location>
        <position position="134"/>
    </location>
    <ligand>
        <name>FAD</name>
        <dbReference type="ChEBI" id="CHEBI:57692"/>
    </ligand>
</feature>
<feature type="binding site" evidence="1">
    <location>
        <position position="139"/>
    </location>
    <ligand>
        <name>L-ornithine</name>
        <dbReference type="ChEBI" id="CHEBI:46911"/>
    </ligand>
</feature>
<feature type="binding site" evidence="1">
    <location>
        <position position="200"/>
    </location>
    <ligand>
        <name>FAD</name>
        <dbReference type="ChEBI" id="CHEBI:57692"/>
    </ligand>
</feature>
<feature type="binding site" evidence="1">
    <location>
        <position position="310"/>
    </location>
    <ligand>
        <name>NADP(+)</name>
        <dbReference type="ChEBI" id="CHEBI:58349"/>
    </ligand>
</feature>
<feature type="binding site" evidence="1">
    <location>
        <begin position="324"/>
        <end position="327"/>
    </location>
    <ligand>
        <name>L-ornithine</name>
        <dbReference type="ChEBI" id="CHEBI:46911"/>
    </ligand>
</feature>
<feature type="binding site" evidence="1">
    <location>
        <position position="354"/>
    </location>
    <ligand>
        <name>L-ornithine</name>
        <dbReference type="ChEBI" id="CHEBI:46911"/>
    </ligand>
</feature>
<feature type="binding site" evidence="1">
    <location>
        <begin position="515"/>
        <end position="517"/>
    </location>
    <ligand>
        <name>FAD</name>
        <dbReference type="ChEBI" id="CHEBI:57692"/>
    </ligand>
</feature>
<feature type="binding site" evidence="1">
    <location>
        <position position="518"/>
    </location>
    <ligand>
        <name>L-ornithine</name>
        <dbReference type="ChEBI" id="CHEBI:46911"/>
    </ligand>
</feature>
<proteinExistence type="inferred from homology"/>
<name>SIDA_BEAB2</name>
<evidence type="ECO:0000250" key="1">
    <source>
        <dbReference type="UniProtKB" id="E9QYP0"/>
    </source>
</evidence>
<evidence type="ECO:0000250" key="2">
    <source>
        <dbReference type="UniProtKB" id="G5EB76"/>
    </source>
</evidence>
<evidence type="ECO:0000256" key="3">
    <source>
        <dbReference type="SAM" id="MobiDB-lite"/>
    </source>
</evidence>
<evidence type="ECO:0000269" key="4">
    <source>
    </source>
</evidence>
<evidence type="ECO:0000303" key="5">
    <source>
    </source>
</evidence>
<evidence type="ECO:0000305" key="6"/>
<sequence length="536" mass="59043">MSPHRETTGDESTTTTVPQNGTNGAAAPELVAVPTNGAAVKAPETLAVQNGANSRVKPIQRSSHLVAADLDGEFDLICVGFGPASLSVAIALHDTLAAGKKLRPDGSSPKVLFLEKQTRFAWHAGMLLPGAKMQISFIKDLATLRDPRSHFTFLNYLHQHDRLVDFTNLSTFLPARVEYEDYMRWCSAHFEHLAQYDHEVVSVTPAVKKADTVKLFAVEARNNVNGQVQTFRGRNIMLATGGKPSFPKSFPVKHPRILHSSQYAYMVPQILTDKNAAYKVVVVGAGQSAAEIFHNIQNLYPNSSTQLVMRQEFLKPSDDSPFVNSIFNPEYIDALFPKSAKGRSEFLVDARATNYGVVRLELIEELFERMYAQKRVLGPDERTWPHRIMGCRQISNIEPHGDRLEVKIHGLSDGVVNSADEEILSADLIIAATGYQRNAHIDMLKSTWEMLPKAVPGTAMFNKGVTGWNVDTEQGERKLAVGRDYRVQYKAGSVAGDAGIWLQGCCEGTHGLSDTLLSVLATRSGEMVQSIFGTEH</sequence>
<protein>
    <recommendedName>
        <fullName evidence="5">L-ornithine N(5)-monooxygenase SIDA</fullName>
        <shortName evidence="2">OMO</shortName>
        <ecNumber evidence="1">1.14.13.196</ecNumber>
    </recommendedName>
    <alternativeName>
        <fullName evidence="5">L-ornithine N(5)-oxygenase SIDA</fullName>
    </alternativeName>
    <alternativeName>
        <fullName evidence="5">Siderophore biosynthesis cluster protein A</fullName>
    </alternativeName>
</protein>
<gene>
    <name evidence="5" type="primary">SIDA</name>
    <name type="ORF">BBA_05021</name>
</gene>
<organism>
    <name type="scientific">Beauveria bassiana (strain ARSEF 2860)</name>
    <name type="common">White muscardine disease fungus</name>
    <name type="synonym">Tritirachium shiotae</name>
    <dbReference type="NCBI Taxonomy" id="655819"/>
    <lineage>
        <taxon>Eukaryota</taxon>
        <taxon>Fungi</taxon>
        <taxon>Dikarya</taxon>
        <taxon>Ascomycota</taxon>
        <taxon>Pezizomycotina</taxon>
        <taxon>Sordariomycetes</taxon>
        <taxon>Hypocreomycetidae</taxon>
        <taxon>Hypocreales</taxon>
        <taxon>Cordycipitaceae</taxon>
        <taxon>Beauveria</taxon>
    </lineage>
</organism>
<comment type="function">
    <text evidence="4">L-ornithine N(5)-monooxygenase; part of the gene cluster that mediates the biosynthesis of at least 11 siderophores, including beauverichelin A, dimerumic acid (DA), Na-dimethyl coprogen (NADC), eleutherazine B, ferricrocin (FC), fusarinine A, fusarinine C (FsC), metachelin A, mevalonolactone, rhodotorulic acid (RA) and tenellin (PubMed:39109629). This cocktail of siderophores for iron metabolism is essential for virulence, and more specifically for the fungal virulence in penetrating through the host cuticle (PubMed:39109629). Siderophore synthesis is also involved in conidial germination under iron-deficient conditions (PubMed:39109629). SIDA initiates the biosynthesis of these siderophores with the enzymatic hydroxylation of ornithine. SIDA is indispensable for the production of most siderophores including fusarinine C and ferricrocin but not mevalonolactone and eleutherazine B. However, SIDA mediates the metabolic interplay between synthesis of mevalonolactone and eleutherazine B and other siderophores (PubMed:39109629).</text>
</comment>
<comment type="catalytic activity">
    <reaction evidence="1">
        <text>L-ornithine + NADH + O2 = N(5)-hydroxy-L-ornithine + NAD(+) + H2O</text>
        <dbReference type="Rhea" id="RHEA:41512"/>
        <dbReference type="ChEBI" id="CHEBI:15377"/>
        <dbReference type="ChEBI" id="CHEBI:15379"/>
        <dbReference type="ChEBI" id="CHEBI:46911"/>
        <dbReference type="ChEBI" id="CHEBI:57540"/>
        <dbReference type="ChEBI" id="CHEBI:57945"/>
        <dbReference type="ChEBI" id="CHEBI:78275"/>
        <dbReference type="EC" id="1.14.13.196"/>
    </reaction>
</comment>
<comment type="catalytic activity">
    <reaction evidence="1">
        <text>L-ornithine + NADPH + O2 = N(5)-hydroxy-L-ornithine + NADP(+) + H2O</text>
        <dbReference type="Rhea" id="RHEA:41508"/>
        <dbReference type="ChEBI" id="CHEBI:15377"/>
        <dbReference type="ChEBI" id="CHEBI:15379"/>
        <dbReference type="ChEBI" id="CHEBI:46911"/>
        <dbReference type="ChEBI" id="CHEBI:57783"/>
        <dbReference type="ChEBI" id="CHEBI:58349"/>
        <dbReference type="ChEBI" id="CHEBI:78275"/>
        <dbReference type="EC" id="1.14.13.196"/>
    </reaction>
</comment>
<comment type="cofactor">
    <cofactor evidence="1">
        <name>FAD</name>
        <dbReference type="ChEBI" id="CHEBI:57692"/>
    </cofactor>
</comment>
<comment type="pathway">
    <text evidence="4">Siderophore biosynthesis.</text>
</comment>
<comment type="subunit">
    <text evidence="1">Homotetramer.</text>
</comment>
<comment type="disruption phenotype">
    <text evidence="4">Leads to increased sensitivity to oxidative stress and iron-starvation, reduced conidial germination as well as reduced virulence (PubMed:39109629). Impairs the production of the 9 siderophores beauverichelin A, dimerumic acid (DA), Na-dimethyl coprogen (NADC), ferricrocin (FC), fusarinine A, fusarinine C (FsC), metachelin A, rhodotorulic acid (RA) and tenellin; but increases the production of mevalonolactone and eleutherazine B (PubMed:39109629).</text>
</comment>
<comment type="similarity">
    <text evidence="6">Belongs to the lysine N(6)-hydroxylase/L-ornithine N(5)-oxygenase family.</text>
</comment>
<keyword id="KW-0274">FAD</keyword>
<keyword id="KW-0285">Flavoprotein</keyword>
<keyword id="KW-0503">Monooxygenase</keyword>
<keyword id="KW-0521">NADP</keyword>
<keyword id="KW-0547">Nucleotide-binding</keyword>
<keyword id="KW-0560">Oxidoreductase</keyword>
<keyword id="KW-1185">Reference proteome</keyword>
<keyword id="KW-0843">Virulence</keyword>
<accession>J4W6X9</accession>
<dbReference type="EC" id="1.14.13.196" evidence="1"/>
<dbReference type="EMBL" id="JH725161">
    <property type="protein sequence ID" value="EJP66050.1"/>
    <property type="molecule type" value="Genomic_DNA"/>
</dbReference>
<dbReference type="RefSeq" id="XP_008598340.1">
    <property type="nucleotide sequence ID" value="XM_008600118.1"/>
</dbReference>
<dbReference type="SMR" id="J4W6X9"/>
<dbReference type="STRING" id="655819.J4W6X9"/>
<dbReference type="GeneID" id="19888033"/>
<dbReference type="HOGENOM" id="CLU_020931_2_0_1"/>
<dbReference type="InParanoid" id="J4W6X9"/>
<dbReference type="OrthoDB" id="455at474943"/>
<dbReference type="Proteomes" id="UP000002762">
    <property type="component" value="Unassembled WGS sequence"/>
</dbReference>
<dbReference type="GO" id="GO:0004497">
    <property type="term" value="F:monooxygenase activity"/>
    <property type="evidence" value="ECO:0007669"/>
    <property type="project" value="UniProtKB-KW"/>
</dbReference>
<dbReference type="GO" id="GO:0000166">
    <property type="term" value="F:nucleotide binding"/>
    <property type="evidence" value="ECO:0007669"/>
    <property type="project" value="UniProtKB-KW"/>
</dbReference>
<dbReference type="GO" id="GO:0009058">
    <property type="term" value="P:biosynthetic process"/>
    <property type="evidence" value="ECO:0007669"/>
    <property type="project" value="UniProtKB-ARBA"/>
</dbReference>
<dbReference type="GO" id="GO:0006879">
    <property type="term" value="P:intracellular iron ion homeostasis"/>
    <property type="evidence" value="ECO:0007669"/>
    <property type="project" value="TreeGrafter"/>
</dbReference>
<dbReference type="Gene3D" id="3.50.50.60">
    <property type="entry name" value="FAD/NAD(P)-binding domain"/>
    <property type="match status" value="1"/>
</dbReference>
<dbReference type="InterPro" id="IPR036188">
    <property type="entry name" value="FAD/NAD-bd_sf"/>
</dbReference>
<dbReference type="InterPro" id="IPR025700">
    <property type="entry name" value="Lys/Orn_oxygenase"/>
</dbReference>
<dbReference type="PANTHER" id="PTHR42802:SF1">
    <property type="entry name" value="L-ORNITHINE N(5)-MONOOXYGENASE"/>
    <property type="match status" value="1"/>
</dbReference>
<dbReference type="PANTHER" id="PTHR42802">
    <property type="entry name" value="MONOOXYGENASE"/>
    <property type="match status" value="1"/>
</dbReference>
<dbReference type="Pfam" id="PF13434">
    <property type="entry name" value="Lys_Orn_oxgnase"/>
    <property type="match status" value="1"/>
</dbReference>
<dbReference type="PRINTS" id="PR00368">
    <property type="entry name" value="FADPNR"/>
</dbReference>
<dbReference type="SUPFAM" id="SSF51905">
    <property type="entry name" value="FAD/NAD(P)-binding domain"/>
    <property type="match status" value="2"/>
</dbReference>
<reference key="1">
    <citation type="journal article" date="2012" name="Sci. Rep.">
        <title>Genomic perspectives on the evolution of fungal entomopathogenicity in Beauveria bassiana.</title>
        <authorList>
            <person name="Xiao G."/>
            <person name="Ying S.-H."/>
            <person name="Zheng P."/>
            <person name="Wang Z.-L."/>
            <person name="Zhang S."/>
            <person name="Xie X.-Q."/>
            <person name="Shang Y."/>
            <person name="St Leger R.J."/>
            <person name="Zhao G.-P."/>
            <person name="Wang C."/>
            <person name="Feng M.-G."/>
        </authorList>
    </citation>
    <scope>NUCLEOTIDE SEQUENCE [LARGE SCALE GENOMIC DNA]</scope>
    <source>
        <strain>ARSEF 2860</strain>
    </source>
</reference>
<reference key="2">
    <citation type="journal article" date="2024" name="J. Agric. Food Chem.">
        <title>Unlocking the siderophore biosynthesis pathway and its biological functions in the fungal insect pathogen Beauveria bassiana.</title>
        <authorList>
            <person name="Sun T.F."/>
            <person name="Ge Z.W."/>
            <person name="Xu H.R."/>
            <person name="Zhang H."/>
            <person name="Huang S.S."/>
            <person name="Feng M.G."/>
            <person name="Ying S.H."/>
        </authorList>
    </citation>
    <scope>FUNCTION</scope>
    <scope>DISRUPTION PHENOTYPE</scope>
    <scope>PATHWAY</scope>
</reference>